<comment type="function">
    <text evidence="1">NDH-1 shuttles electrons from NADH, via FMN and iron-sulfur (Fe-S) centers, to quinones in the respiratory chain. The immediate electron acceptor for the enzyme in this species is believed to be ubiquinone. Couples the redox reaction to proton translocation (for every two electrons transferred, four hydrogen ions are translocated across the cytoplasmic membrane), and thus conserves the redox energy in a proton gradient.</text>
</comment>
<comment type="catalytic activity">
    <reaction evidence="1">
        <text>a quinone + NADH + 5 H(+)(in) = a quinol + NAD(+) + 4 H(+)(out)</text>
        <dbReference type="Rhea" id="RHEA:57888"/>
        <dbReference type="ChEBI" id="CHEBI:15378"/>
        <dbReference type="ChEBI" id="CHEBI:24646"/>
        <dbReference type="ChEBI" id="CHEBI:57540"/>
        <dbReference type="ChEBI" id="CHEBI:57945"/>
        <dbReference type="ChEBI" id="CHEBI:132124"/>
    </reaction>
</comment>
<comment type="subunit">
    <text evidence="1">NDH-1 is composed of 14 different subunits. Subunits NuoA, H, J, K, L, M, N constitute the membrane sector of the complex.</text>
</comment>
<comment type="subcellular location">
    <subcellularLocation>
        <location evidence="1">Cell inner membrane</location>
        <topology evidence="1">Multi-pass membrane protein</topology>
    </subcellularLocation>
</comment>
<comment type="similarity">
    <text evidence="1">Belongs to the complex I subunit 2 family.</text>
</comment>
<gene>
    <name evidence="1" type="primary">nuoN</name>
    <name type="ordered locus">Swit_2998</name>
</gene>
<organism>
    <name type="scientific">Rhizorhabdus wittichii (strain DSM 6014 / CCUG 31198 / JCM 15750 / NBRC 105917 / EY 4224 / RW1)</name>
    <name type="common">Sphingomonas wittichii</name>
    <dbReference type="NCBI Taxonomy" id="392499"/>
    <lineage>
        <taxon>Bacteria</taxon>
        <taxon>Pseudomonadati</taxon>
        <taxon>Pseudomonadota</taxon>
        <taxon>Alphaproteobacteria</taxon>
        <taxon>Sphingomonadales</taxon>
        <taxon>Sphingomonadaceae</taxon>
        <taxon>Rhizorhabdus</taxon>
    </lineage>
</organism>
<sequence length="481" mass="49576">MSMTASLALTVPELILSVGALLLLLVAAFGGDGFARAIGWGAVALFAAAGFSLTGPAGNGGPGFDGLYIADSFAAFAKLLIYIAAAVSVAVAPGFFSRTGGGYRAEYPVLILLSGVGMGMMVSAGDLLTLYVGLELQSLSAYVLASFMRRDTRSAEAGLKYFVLGALASGILLYGISLLYGFTGTTLFAGISDSLAKGMGTGQMFGMVFVFAGLAFKISAVPFHMWTPDVYEGAPTPVTAFFASAPKVAGMALLLRVAIEAMGSGTDTWRQIVVFAALASTILGAVAAIGQTSMKRLLAYSSINNVGFALFGLAAGSADGVAATMTYMAVYVAMTLGSFICVLQMRGQDGQPVETIASLSGLSRSRPGLAAAFAIFMFSLAGIPPLFGFWPKFLVFDALVRAGFWPLAMVGIATSVIGAFYYLKIVKTIYFDDPAPAEFAPAASKLEGGLITLAALAVSPLGYLAIPLLDATSMAAARSLF</sequence>
<keyword id="KW-0997">Cell inner membrane</keyword>
<keyword id="KW-1003">Cell membrane</keyword>
<keyword id="KW-0472">Membrane</keyword>
<keyword id="KW-0520">NAD</keyword>
<keyword id="KW-0874">Quinone</keyword>
<keyword id="KW-1185">Reference proteome</keyword>
<keyword id="KW-1278">Translocase</keyword>
<keyword id="KW-0812">Transmembrane</keyword>
<keyword id="KW-1133">Transmembrane helix</keyword>
<keyword id="KW-0813">Transport</keyword>
<keyword id="KW-0830">Ubiquinone</keyword>
<feature type="chain" id="PRO_5000250937" description="NADH-quinone oxidoreductase subunit N">
    <location>
        <begin position="1"/>
        <end position="481"/>
    </location>
</feature>
<feature type="transmembrane region" description="Helical" evidence="1">
    <location>
        <begin position="14"/>
        <end position="34"/>
    </location>
</feature>
<feature type="transmembrane region" description="Helical" evidence="1">
    <location>
        <begin position="38"/>
        <end position="57"/>
    </location>
</feature>
<feature type="transmembrane region" description="Helical" evidence="1">
    <location>
        <begin position="76"/>
        <end position="96"/>
    </location>
</feature>
<feature type="transmembrane region" description="Helical" evidence="1">
    <location>
        <begin position="108"/>
        <end position="128"/>
    </location>
</feature>
<feature type="transmembrane region" description="Helical" evidence="1">
    <location>
        <begin position="162"/>
        <end position="182"/>
    </location>
</feature>
<feature type="transmembrane region" description="Helical" evidence="1">
    <location>
        <begin position="204"/>
        <end position="224"/>
    </location>
</feature>
<feature type="transmembrane region" description="Helical" evidence="1">
    <location>
        <begin position="235"/>
        <end position="255"/>
    </location>
</feature>
<feature type="transmembrane region" description="Helical" evidence="1">
    <location>
        <begin position="272"/>
        <end position="292"/>
    </location>
</feature>
<feature type="transmembrane region" description="Helical" evidence="1">
    <location>
        <begin position="297"/>
        <end position="317"/>
    </location>
</feature>
<feature type="transmembrane region" description="Helical" evidence="1">
    <location>
        <begin position="323"/>
        <end position="343"/>
    </location>
</feature>
<feature type="transmembrane region" description="Helical" evidence="1">
    <location>
        <begin position="369"/>
        <end position="389"/>
    </location>
</feature>
<feature type="transmembrane region" description="Helical" evidence="1">
    <location>
        <begin position="403"/>
        <end position="423"/>
    </location>
</feature>
<feature type="transmembrane region" description="Helical" evidence="1">
    <location>
        <begin position="449"/>
        <end position="469"/>
    </location>
</feature>
<protein>
    <recommendedName>
        <fullName evidence="1">NADH-quinone oxidoreductase subunit N</fullName>
        <ecNumber evidence="1">7.1.1.-</ecNumber>
    </recommendedName>
    <alternativeName>
        <fullName evidence="1">NADH dehydrogenase I subunit N</fullName>
    </alternativeName>
    <alternativeName>
        <fullName evidence="1">NDH-1 subunit N</fullName>
    </alternativeName>
</protein>
<name>NUON_RHIWR</name>
<dbReference type="EC" id="7.1.1.-" evidence="1"/>
<dbReference type="EMBL" id="CP000699">
    <property type="protein sequence ID" value="ABQ69349.1"/>
    <property type="molecule type" value="Genomic_DNA"/>
</dbReference>
<dbReference type="SMR" id="A5VAN3"/>
<dbReference type="STRING" id="392499.Swit_2998"/>
<dbReference type="PaxDb" id="392499-Swit_2998"/>
<dbReference type="KEGG" id="swi:Swit_2998"/>
<dbReference type="eggNOG" id="COG1007">
    <property type="taxonomic scope" value="Bacteria"/>
</dbReference>
<dbReference type="HOGENOM" id="CLU_007100_1_1_5"/>
<dbReference type="OrthoDB" id="9811718at2"/>
<dbReference type="Proteomes" id="UP000001989">
    <property type="component" value="Chromosome"/>
</dbReference>
<dbReference type="GO" id="GO:0005886">
    <property type="term" value="C:plasma membrane"/>
    <property type="evidence" value="ECO:0007669"/>
    <property type="project" value="UniProtKB-SubCell"/>
</dbReference>
<dbReference type="GO" id="GO:0008137">
    <property type="term" value="F:NADH dehydrogenase (ubiquinone) activity"/>
    <property type="evidence" value="ECO:0007669"/>
    <property type="project" value="InterPro"/>
</dbReference>
<dbReference type="GO" id="GO:0050136">
    <property type="term" value="F:NADH:ubiquinone reductase (non-electrogenic) activity"/>
    <property type="evidence" value="ECO:0007669"/>
    <property type="project" value="UniProtKB-UniRule"/>
</dbReference>
<dbReference type="GO" id="GO:0048038">
    <property type="term" value="F:quinone binding"/>
    <property type="evidence" value="ECO:0007669"/>
    <property type="project" value="UniProtKB-KW"/>
</dbReference>
<dbReference type="GO" id="GO:0042773">
    <property type="term" value="P:ATP synthesis coupled electron transport"/>
    <property type="evidence" value="ECO:0007669"/>
    <property type="project" value="InterPro"/>
</dbReference>
<dbReference type="HAMAP" id="MF_00445">
    <property type="entry name" value="NDH1_NuoN_1"/>
    <property type="match status" value="1"/>
</dbReference>
<dbReference type="InterPro" id="IPR010096">
    <property type="entry name" value="NADH-Q_OxRdtase_suN/2"/>
</dbReference>
<dbReference type="InterPro" id="IPR001750">
    <property type="entry name" value="ND/Mrp_TM"/>
</dbReference>
<dbReference type="NCBIfam" id="TIGR01770">
    <property type="entry name" value="NDH_I_N"/>
    <property type="match status" value="1"/>
</dbReference>
<dbReference type="NCBIfam" id="NF004440">
    <property type="entry name" value="PRK05777.1-3"/>
    <property type="match status" value="1"/>
</dbReference>
<dbReference type="PANTHER" id="PTHR22773">
    <property type="entry name" value="NADH DEHYDROGENASE"/>
    <property type="match status" value="1"/>
</dbReference>
<dbReference type="Pfam" id="PF00361">
    <property type="entry name" value="Proton_antipo_M"/>
    <property type="match status" value="1"/>
</dbReference>
<evidence type="ECO:0000255" key="1">
    <source>
        <dbReference type="HAMAP-Rule" id="MF_00445"/>
    </source>
</evidence>
<accession>A5VAN3</accession>
<reference key="1">
    <citation type="journal article" date="2010" name="J. Bacteriol.">
        <title>Genome sequence of the dioxin-mineralizing bacterium Sphingomonas wittichii RW1.</title>
        <authorList>
            <person name="Miller T.R."/>
            <person name="Delcher A.L."/>
            <person name="Salzberg S.L."/>
            <person name="Saunders E."/>
            <person name="Detter J.C."/>
            <person name="Halden R.U."/>
        </authorList>
    </citation>
    <scope>NUCLEOTIDE SEQUENCE [LARGE SCALE GENOMIC DNA]</scope>
    <source>
        <strain>DSM 6014 / CCUG 31198 / JCM 15750 / NBRC 105917 / EY 4224 / RW1</strain>
    </source>
</reference>
<proteinExistence type="inferred from homology"/>